<gene>
    <name type="primary">CAST</name>
</gene>
<accession>Q95208</accession>
<proteinExistence type="evidence at transcript level"/>
<feature type="chain" id="PRO_0000147636" description="Calpastatin">
    <location>
        <begin position="1"/>
        <end position="723"/>
    </location>
</feature>
<feature type="repeat" description="Inhibitory domain 1">
    <location>
        <begin position="171"/>
        <end position="224"/>
    </location>
</feature>
<feature type="repeat" description="Inhibitory domain 2">
    <location>
        <begin position="307"/>
        <end position="359"/>
    </location>
</feature>
<feature type="repeat" description="Inhibitory domain 3">
    <location>
        <begin position="449"/>
        <end position="502"/>
    </location>
</feature>
<feature type="repeat" description="Inhibitory domain 4">
    <location>
        <begin position="586"/>
        <end position="642"/>
    </location>
</feature>
<feature type="region of interest" description="Disordered" evidence="5">
    <location>
        <begin position="1"/>
        <end position="402"/>
    </location>
</feature>
<feature type="region of interest" description="Disordered" evidence="5">
    <location>
        <begin position="422"/>
        <end position="509"/>
    </location>
</feature>
<feature type="region of interest" description="Disordered" evidence="5">
    <location>
        <begin position="547"/>
        <end position="723"/>
    </location>
</feature>
<feature type="compositionally biased region" description="Basic residues" evidence="5">
    <location>
        <begin position="21"/>
        <end position="30"/>
    </location>
</feature>
<feature type="compositionally biased region" description="Basic and acidic residues" evidence="5">
    <location>
        <begin position="46"/>
        <end position="84"/>
    </location>
</feature>
<feature type="compositionally biased region" description="Low complexity" evidence="5">
    <location>
        <begin position="85"/>
        <end position="94"/>
    </location>
</feature>
<feature type="compositionally biased region" description="Low complexity" evidence="5">
    <location>
        <begin position="113"/>
        <end position="125"/>
    </location>
</feature>
<feature type="compositionally biased region" description="Acidic residues" evidence="5">
    <location>
        <begin position="157"/>
        <end position="173"/>
    </location>
</feature>
<feature type="compositionally biased region" description="Basic and acidic residues" evidence="5">
    <location>
        <begin position="195"/>
        <end position="216"/>
    </location>
</feature>
<feature type="compositionally biased region" description="Basic and acidic residues" evidence="5">
    <location>
        <begin position="249"/>
        <end position="263"/>
    </location>
</feature>
<feature type="compositionally biased region" description="Basic and acidic residues" evidence="5">
    <location>
        <begin position="306"/>
        <end position="367"/>
    </location>
</feature>
<feature type="compositionally biased region" description="Basic and acidic residues" evidence="5">
    <location>
        <begin position="378"/>
        <end position="396"/>
    </location>
</feature>
<feature type="compositionally biased region" description="Basic and acidic residues" evidence="5">
    <location>
        <begin position="445"/>
        <end position="504"/>
    </location>
</feature>
<feature type="compositionally biased region" description="Low complexity" evidence="5">
    <location>
        <begin position="548"/>
        <end position="560"/>
    </location>
</feature>
<feature type="compositionally biased region" description="Basic and acidic residues" evidence="5">
    <location>
        <begin position="562"/>
        <end position="571"/>
    </location>
</feature>
<feature type="compositionally biased region" description="Basic and acidic residues" evidence="5">
    <location>
        <begin position="586"/>
        <end position="643"/>
    </location>
</feature>
<feature type="compositionally biased region" description="Polar residues" evidence="5">
    <location>
        <begin position="653"/>
        <end position="670"/>
    </location>
</feature>
<feature type="compositionally biased region" description="Low complexity" evidence="5">
    <location>
        <begin position="672"/>
        <end position="690"/>
    </location>
</feature>
<feature type="compositionally biased region" description="Basic and acidic residues" evidence="5">
    <location>
        <begin position="701"/>
        <end position="723"/>
    </location>
</feature>
<feature type="modified residue" description="N6-acetyllysine" evidence="4">
    <location>
        <position position="50"/>
    </location>
</feature>
<feature type="modified residue" description="Phosphoserine" evidence="4">
    <location>
        <position position="87"/>
    </location>
</feature>
<feature type="modified residue" description="Phosphothreonine" evidence="3">
    <location>
        <position position="137"/>
    </location>
</feature>
<feature type="modified residue" description="Phosphoserine" evidence="4">
    <location>
        <position position="224"/>
    </location>
</feature>
<feature type="modified residue" description="Phosphoserine" evidence="2">
    <location>
        <position position="245"/>
    </location>
</feature>
<feature type="modified residue" description="Phosphoserine" evidence="2">
    <location>
        <position position="367"/>
    </location>
</feature>
<feature type="modified residue" description="Phosphoserine" evidence="2">
    <location>
        <position position="369"/>
    </location>
</feature>
<feature type="modified residue" description="Phosphoserine" evidence="2">
    <location>
        <position position="376"/>
    </location>
</feature>
<feature type="modified residue" description="Phosphoserine" evidence="2">
    <location>
        <position position="443"/>
    </location>
</feature>
<feature type="modified residue" description="Phosphoserine" evidence="2">
    <location>
        <position position="519"/>
    </location>
</feature>
<feature type="modified residue" description="Phosphoserine" evidence="2">
    <location>
        <position position="530"/>
    </location>
</feature>
<feature type="modified residue" description="Phosphoserine" evidence="2">
    <location>
        <position position="578"/>
    </location>
</feature>
<feature type="modified residue" description="Phosphoserine" evidence="2">
    <location>
        <position position="580"/>
    </location>
</feature>
<feature type="cross-link" description="Glycyl lysine isopeptide (Lys-Gly) (interchain with G-Cter in SUMO2)" evidence="2">
    <location>
        <position position="32"/>
    </location>
</feature>
<keyword id="KW-0007">Acetylation</keyword>
<keyword id="KW-1017">Isopeptide bond</keyword>
<keyword id="KW-0597">Phosphoprotein</keyword>
<keyword id="KW-0646">Protease inhibitor</keyword>
<keyword id="KW-1185">Reference proteome</keyword>
<keyword id="KW-0677">Repeat</keyword>
<keyword id="KW-0789">Thiol protease inhibitor</keyword>
<keyword id="KW-0832">Ubl conjugation</keyword>
<sequence>MNPTEAKAIPGSKQLEGPHSPNKKRHKKQAVKTEPEKKSQSTKPSVVHEKKTQEVKPKEHTEPKSQPKHPSDTRSKHAPKEKAVSKSSEQPPSEKSTKPKTKSQDEISGGGKSAVPAVAAAASAEPADKNKESKLLTSAVPVESKPSKPSAKSDMDTALDDLIDTLGEPEETKEDTTTYTGPEVSDPMSSTYIEELGKREVTLPPKYRELLNKEEGIAGPPPDSSKPLGPNDAIDALSSDFTCSSPTADAKKTEKEKSTEEALKAQSAGVIRSAAPPKEKRRKVEEDTMTEQALEALSASLGTRKPRPELDPSSIKEVDEAKAKEEKVKKCGEDEERVPSEYRLKPATDKDGKPLLPEAEEKPKPLSESELIDELSEDFDRSKCKEKQSKPTEKNRGIPGRCPRACARGCASDLHVFCAVSSTHSSSSEGMVPDDAVEALAGSLGKKEADPEDGKPVEDKVKEKAKEEDREKLGEREETIPPDYRLEEAKDKDGKPLPPKEVKEPLPPLSEDFLLDALSKDFTVPSDTSSPQFEDAKLSVVVSEVVSQTPAPTTQAAGPPRDSARDNKELDDALDQLSDSLGQRQPDPDEHKPVEDKVKEKAKAEHRDKLGERDDTIPPKYQHLLDDNKEGTPGKPKRSESPRHQRSPRHQRNLQVPRTPLTPSQGTWTAVPQLQKPQQTQQRTKTRSLLPSDKAPRNGGKAKDSTKAKEETSKPKADGKSTS</sequence>
<name>ICAL_SHEEP</name>
<organism>
    <name type="scientific">Ovis aries</name>
    <name type="common">Sheep</name>
    <dbReference type="NCBI Taxonomy" id="9940"/>
    <lineage>
        <taxon>Eukaryota</taxon>
        <taxon>Metazoa</taxon>
        <taxon>Chordata</taxon>
        <taxon>Craniata</taxon>
        <taxon>Vertebrata</taxon>
        <taxon>Euteleostomi</taxon>
        <taxon>Mammalia</taxon>
        <taxon>Eutheria</taxon>
        <taxon>Laurasiatheria</taxon>
        <taxon>Artiodactyla</taxon>
        <taxon>Ruminantia</taxon>
        <taxon>Pecora</taxon>
        <taxon>Bovidae</taxon>
        <taxon>Caprinae</taxon>
        <taxon>Ovis</taxon>
    </lineage>
</organism>
<reference key="1">
    <citation type="submission" date="1996-09" db="EMBL/GenBank/DDBJ databases">
        <title>Sequence analysis of ovine myocardial calpastatin mRNA transcripts.</title>
        <authorList>
            <person name="Mainelli K."/>
            <person name="Sugimoto J."/>
            <person name="Fishkin A."/>
            <person name="Knezetic J."/>
        </authorList>
    </citation>
    <scope>NUCLEOTIDE SEQUENCE [MRNA]</scope>
    <source>
        <tissue>Heart</tissue>
    </source>
</reference>
<dbReference type="EMBL" id="U66320">
    <property type="protein sequence ID" value="AAB07483.1"/>
    <property type="molecule type" value="mRNA"/>
</dbReference>
<dbReference type="RefSeq" id="NP_001009788.1">
    <property type="nucleotide sequence ID" value="NM_001009788.1"/>
</dbReference>
<dbReference type="SMR" id="Q95208"/>
<dbReference type="STRING" id="9940.ENSOARP00000019013"/>
<dbReference type="MEROPS" id="I27.001"/>
<dbReference type="MEROPS" id="I27.002"/>
<dbReference type="MEROPS" id="I27.003"/>
<dbReference type="MEROPS" id="I27.004"/>
<dbReference type="GeneID" id="443364"/>
<dbReference type="KEGG" id="oas:443364"/>
<dbReference type="CTD" id="831"/>
<dbReference type="OrthoDB" id="8926414at2759"/>
<dbReference type="Proteomes" id="UP000002356">
    <property type="component" value="Unplaced"/>
</dbReference>
<dbReference type="GO" id="GO:0005737">
    <property type="term" value="C:cytoplasm"/>
    <property type="evidence" value="ECO:0007669"/>
    <property type="project" value="TreeGrafter"/>
</dbReference>
<dbReference type="GO" id="GO:0010859">
    <property type="term" value="F:calcium-dependent cysteine-type endopeptidase inhibitor activity"/>
    <property type="evidence" value="ECO:0007669"/>
    <property type="project" value="TreeGrafter"/>
</dbReference>
<dbReference type="InterPro" id="IPR026998">
    <property type="entry name" value="Calpastatin"/>
</dbReference>
<dbReference type="InterPro" id="IPR001259">
    <property type="entry name" value="Prot_inh_calpain"/>
</dbReference>
<dbReference type="PANTHER" id="PTHR10077">
    <property type="entry name" value="CALPASTATIN"/>
    <property type="match status" value="1"/>
</dbReference>
<dbReference type="PANTHER" id="PTHR10077:SF0">
    <property type="entry name" value="CALPASTATIN"/>
    <property type="match status" value="1"/>
</dbReference>
<dbReference type="Pfam" id="PF00748">
    <property type="entry name" value="Calpain_inhib"/>
    <property type="match status" value="3"/>
</dbReference>
<evidence type="ECO:0000250" key="1"/>
<evidence type="ECO:0000250" key="2">
    <source>
        <dbReference type="UniProtKB" id="P20810"/>
    </source>
</evidence>
<evidence type="ECO:0000250" key="3">
    <source>
        <dbReference type="UniProtKB" id="P27321"/>
    </source>
</evidence>
<evidence type="ECO:0000250" key="4">
    <source>
        <dbReference type="UniProtKB" id="P51125"/>
    </source>
</evidence>
<evidence type="ECO:0000256" key="5">
    <source>
        <dbReference type="SAM" id="MobiDB-lite"/>
    </source>
</evidence>
<evidence type="ECO:0000305" key="6"/>
<protein>
    <recommendedName>
        <fullName>Calpastatin</fullName>
    </recommendedName>
    <alternativeName>
        <fullName>Calpain inhibitor</fullName>
    </alternativeName>
</protein>
<comment type="function">
    <text evidence="1">Specific inhibition of calpain (calcium-dependent cysteine protease). Plays a key role in postmortem tenderization of meat and have been proposed to be involved in muscle protein degradation in living tissue (By similarity).</text>
</comment>
<comment type="domain">
    <text evidence="1">Each of the four flexible inhibitory domains can inhibit one calcium-bound calpain molecule by occupying both sides of the active site.</text>
</comment>
<comment type="similarity">
    <text evidence="6">Belongs to the protease inhibitor I27 (calpastatin) family.</text>
</comment>